<name>YOQB_BACSU</name>
<sequence>MKEFHLHKYPVTSVEGNEYAVSIYNDRHSKGFVKVSLYKKVRGFFRKEKFKCLTREGDFAPSYFEEKWDYDYIQMAINEVINYENSIKEQINHENKQKAAIEKFEAWSGQEV</sequence>
<reference key="1">
    <citation type="journal article" date="1997" name="Nature">
        <title>The complete genome sequence of the Gram-positive bacterium Bacillus subtilis.</title>
        <authorList>
            <person name="Kunst F."/>
            <person name="Ogasawara N."/>
            <person name="Moszer I."/>
            <person name="Albertini A.M."/>
            <person name="Alloni G."/>
            <person name="Azevedo V."/>
            <person name="Bertero M.G."/>
            <person name="Bessieres P."/>
            <person name="Bolotin A."/>
            <person name="Borchert S."/>
            <person name="Borriss R."/>
            <person name="Boursier L."/>
            <person name="Brans A."/>
            <person name="Braun M."/>
            <person name="Brignell S.C."/>
            <person name="Bron S."/>
            <person name="Brouillet S."/>
            <person name="Bruschi C.V."/>
            <person name="Caldwell B."/>
            <person name="Capuano V."/>
            <person name="Carter N.M."/>
            <person name="Choi S.-K."/>
            <person name="Codani J.-J."/>
            <person name="Connerton I.F."/>
            <person name="Cummings N.J."/>
            <person name="Daniel R.A."/>
            <person name="Denizot F."/>
            <person name="Devine K.M."/>
            <person name="Duesterhoeft A."/>
            <person name="Ehrlich S.D."/>
            <person name="Emmerson P.T."/>
            <person name="Entian K.-D."/>
            <person name="Errington J."/>
            <person name="Fabret C."/>
            <person name="Ferrari E."/>
            <person name="Foulger D."/>
            <person name="Fritz C."/>
            <person name="Fujita M."/>
            <person name="Fujita Y."/>
            <person name="Fuma S."/>
            <person name="Galizzi A."/>
            <person name="Galleron N."/>
            <person name="Ghim S.-Y."/>
            <person name="Glaser P."/>
            <person name="Goffeau A."/>
            <person name="Golightly E.J."/>
            <person name="Grandi G."/>
            <person name="Guiseppi G."/>
            <person name="Guy B.J."/>
            <person name="Haga K."/>
            <person name="Haiech J."/>
            <person name="Harwood C.R."/>
            <person name="Henaut A."/>
            <person name="Hilbert H."/>
            <person name="Holsappel S."/>
            <person name="Hosono S."/>
            <person name="Hullo M.-F."/>
            <person name="Itaya M."/>
            <person name="Jones L.-M."/>
            <person name="Joris B."/>
            <person name="Karamata D."/>
            <person name="Kasahara Y."/>
            <person name="Klaerr-Blanchard M."/>
            <person name="Klein C."/>
            <person name="Kobayashi Y."/>
            <person name="Koetter P."/>
            <person name="Koningstein G."/>
            <person name="Krogh S."/>
            <person name="Kumano M."/>
            <person name="Kurita K."/>
            <person name="Lapidus A."/>
            <person name="Lardinois S."/>
            <person name="Lauber J."/>
            <person name="Lazarevic V."/>
            <person name="Lee S.-M."/>
            <person name="Levine A."/>
            <person name="Liu H."/>
            <person name="Masuda S."/>
            <person name="Mauel C."/>
            <person name="Medigue C."/>
            <person name="Medina N."/>
            <person name="Mellado R.P."/>
            <person name="Mizuno M."/>
            <person name="Moestl D."/>
            <person name="Nakai S."/>
            <person name="Noback M."/>
            <person name="Noone D."/>
            <person name="O'Reilly M."/>
            <person name="Ogawa K."/>
            <person name="Ogiwara A."/>
            <person name="Oudega B."/>
            <person name="Park S.-H."/>
            <person name="Parro V."/>
            <person name="Pohl T.M."/>
            <person name="Portetelle D."/>
            <person name="Porwollik S."/>
            <person name="Prescott A.M."/>
            <person name="Presecan E."/>
            <person name="Pujic P."/>
            <person name="Purnelle B."/>
            <person name="Rapoport G."/>
            <person name="Rey M."/>
            <person name="Reynolds S."/>
            <person name="Rieger M."/>
            <person name="Rivolta C."/>
            <person name="Rocha E."/>
            <person name="Roche B."/>
            <person name="Rose M."/>
            <person name="Sadaie Y."/>
            <person name="Sato T."/>
            <person name="Scanlan E."/>
            <person name="Schleich S."/>
            <person name="Schroeter R."/>
            <person name="Scoffone F."/>
            <person name="Sekiguchi J."/>
            <person name="Sekowska A."/>
            <person name="Seror S.J."/>
            <person name="Serror P."/>
            <person name="Shin B.-S."/>
            <person name="Soldo B."/>
            <person name="Sorokin A."/>
            <person name="Tacconi E."/>
            <person name="Takagi T."/>
            <person name="Takahashi H."/>
            <person name="Takemaru K."/>
            <person name="Takeuchi M."/>
            <person name="Tamakoshi A."/>
            <person name="Tanaka T."/>
            <person name="Terpstra P."/>
            <person name="Tognoni A."/>
            <person name="Tosato V."/>
            <person name="Uchiyama S."/>
            <person name="Vandenbol M."/>
            <person name="Vannier F."/>
            <person name="Vassarotti A."/>
            <person name="Viari A."/>
            <person name="Wambutt R."/>
            <person name="Wedler E."/>
            <person name="Wedler H."/>
            <person name="Weitzenegger T."/>
            <person name="Winters P."/>
            <person name="Wipat A."/>
            <person name="Yamamoto H."/>
            <person name="Yamane K."/>
            <person name="Yasumoto K."/>
            <person name="Yata K."/>
            <person name="Yoshida K."/>
            <person name="Yoshikawa H.-F."/>
            <person name="Zumstein E."/>
            <person name="Yoshikawa H."/>
            <person name="Danchin A."/>
        </authorList>
    </citation>
    <scope>NUCLEOTIDE SEQUENCE [LARGE SCALE GENOMIC DNA]</scope>
    <source>
        <strain>168</strain>
    </source>
</reference>
<feature type="chain" id="PRO_0000369426" description="SPbeta prophage-derived uncharacterized protein YoqB">
    <location>
        <begin position="1"/>
        <end position="112"/>
    </location>
</feature>
<proteinExistence type="predicted"/>
<organism>
    <name type="scientific">Bacillus subtilis (strain 168)</name>
    <dbReference type="NCBI Taxonomy" id="224308"/>
    <lineage>
        <taxon>Bacteria</taxon>
        <taxon>Bacillati</taxon>
        <taxon>Bacillota</taxon>
        <taxon>Bacilli</taxon>
        <taxon>Bacillales</taxon>
        <taxon>Bacillaceae</taxon>
        <taxon>Bacillus</taxon>
    </lineage>
</organism>
<gene>
    <name type="primary">yoqB</name>
    <name type="ordered locus">BSU20690</name>
</gene>
<protein>
    <recommendedName>
        <fullName>SPbeta prophage-derived uncharacterized protein YoqB</fullName>
    </recommendedName>
</protein>
<dbReference type="EMBL" id="AL009126">
    <property type="protein sequence ID" value="CAB13961.1"/>
    <property type="molecule type" value="Genomic_DNA"/>
</dbReference>
<dbReference type="RefSeq" id="NP_389951.1">
    <property type="nucleotide sequence ID" value="NC_000964.3"/>
</dbReference>
<dbReference type="RefSeq" id="WP_004399388.1">
    <property type="nucleotide sequence ID" value="NZ_OZ025638.1"/>
</dbReference>
<dbReference type="FunCoup" id="O34831">
    <property type="interactions" value="46"/>
</dbReference>
<dbReference type="IntAct" id="O34831">
    <property type="interactions" value="1"/>
</dbReference>
<dbReference type="STRING" id="224308.BSU20690"/>
<dbReference type="PaxDb" id="224308-BSU20690"/>
<dbReference type="EnsemblBacteria" id="CAB13961">
    <property type="protein sequence ID" value="CAB13961"/>
    <property type="gene ID" value="BSU_20690"/>
</dbReference>
<dbReference type="GeneID" id="939431"/>
<dbReference type="KEGG" id="bsu:BSU20690"/>
<dbReference type="PATRIC" id="fig|224308.179.peg.2259"/>
<dbReference type="InParanoid" id="O34831"/>
<dbReference type="OrthoDB" id="2893814at2"/>
<dbReference type="BioCyc" id="BSUB:BSU20690-MONOMER"/>
<dbReference type="Proteomes" id="UP000001570">
    <property type="component" value="Chromosome"/>
</dbReference>
<keyword id="KW-1185">Reference proteome</keyword>
<accession>O34831</accession>